<organism>
    <name type="scientific">Saccharomyces cerevisiae (strain ATCC 204508 / S288c)</name>
    <name type="common">Baker's yeast</name>
    <dbReference type="NCBI Taxonomy" id="559292"/>
    <lineage>
        <taxon>Eukaryota</taxon>
        <taxon>Fungi</taxon>
        <taxon>Dikarya</taxon>
        <taxon>Ascomycota</taxon>
        <taxon>Saccharomycotina</taxon>
        <taxon>Saccharomycetes</taxon>
        <taxon>Saccharomycetales</taxon>
        <taxon>Saccharomycetaceae</taxon>
        <taxon>Saccharomyces</taxon>
    </lineage>
</organism>
<protein>
    <recommendedName>
        <fullName>UPF0587 protein YCR090C</fullName>
    </recommendedName>
</protein>
<evidence type="ECO:0000250" key="1">
    <source>
        <dbReference type="UniProtKB" id="Q9NWV4"/>
    </source>
</evidence>
<evidence type="ECO:0000269" key="2">
    <source>
    </source>
</evidence>
<evidence type="ECO:0000305" key="3"/>
<keyword id="KW-0479">Metal-binding</keyword>
<keyword id="KW-1185">Reference proteome</keyword>
<keyword id="KW-0862">Zinc</keyword>
<accession>P25654</accession>
<accession>D6VR90</accession>
<sequence length="182" mass="20704">MPLFLVLKATLSENVTKVSIENTNESRAEFAFDLQCTSCRELHDSKVIINTFEEYAMPASKGTASFLMKCKFCSKELSVNLCAFEDEYLTDQSDDKWAKIKDVRKKHGLSKVKEDSFIPLSLDCRGCELIKFYPDTITFEVSLSSGKVMSCQLEDNEWYDYDDNLGEEVTMTDFSSSIIKGK</sequence>
<reference key="1">
    <citation type="journal article" date="1992" name="Yeast">
        <title>The complete sequence of a 6146 bp fragment of Saccharomyces cerevisiae chromosome III contains two new open reading frames.</title>
        <authorList>
            <person name="Wilson C."/>
            <person name="Grisanti P."/>
            <person name="Frontali L."/>
        </authorList>
    </citation>
    <scope>NUCLEOTIDE SEQUENCE [GENOMIC DNA]</scope>
</reference>
<reference key="2">
    <citation type="journal article" date="1992" name="Nature">
        <title>The complete DNA sequence of yeast chromosome III.</title>
        <authorList>
            <person name="Oliver S.G."/>
            <person name="van der Aart Q.J.M."/>
            <person name="Agostoni-Carbone M.L."/>
            <person name="Aigle M."/>
            <person name="Alberghina L."/>
            <person name="Alexandraki D."/>
            <person name="Antoine G."/>
            <person name="Anwar R."/>
            <person name="Ballesta J.P.G."/>
            <person name="Benit P."/>
            <person name="Berben G."/>
            <person name="Bergantino E."/>
            <person name="Biteau N."/>
            <person name="Bolle P.-A."/>
            <person name="Bolotin-Fukuhara M."/>
            <person name="Brown A."/>
            <person name="Brown A.J.P."/>
            <person name="Buhler J.-M."/>
            <person name="Carcano C."/>
            <person name="Carignani G."/>
            <person name="Cederberg H."/>
            <person name="Chanet R."/>
            <person name="Contreras R."/>
            <person name="Crouzet M."/>
            <person name="Daignan-Fornier B."/>
            <person name="Defoor E."/>
            <person name="Delgado M.D."/>
            <person name="Demolder J."/>
            <person name="Doira C."/>
            <person name="Dubois E."/>
            <person name="Dujon B."/>
            <person name="Duesterhoeft A."/>
            <person name="Erdmann D."/>
            <person name="Esteban M."/>
            <person name="Fabre F."/>
            <person name="Fairhead C."/>
            <person name="Faye G."/>
            <person name="Feldmann H."/>
            <person name="Fiers W."/>
            <person name="Francingues-Gaillard M.-C."/>
            <person name="Franco L."/>
            <person name="Frontali L."/>
            <person name="Fukuhara H."/>
            <person name="Fuller L.J."/>
            <person name="Galland P."/>
            <person name="Gent M.E."/>
            <person name="Gigot D."/>
            <person name="Gilliquet V."/>
            <person name="Glansdorff N."/>
            <person name="Goffeau A."/>
            <person name="Grenson M."/>
            <person name="Grisanti P."/>
            <person name="Grivell L.A."/>
            <person name="de Haan M."/>
            <person name="Haasemann M."/>
            <person name="Hatat D."/>
            <person name="Hoenicka J."/>
            <person name="Hegemann J.H."/>
            <person name="Herbert C.J."/>
            <person name="Hilger F."/>
            <person name="Hohmann S."/>
            <person name="Hollenberg C.P."/>
            <person name="Huse K."/>
            <person name="Iborra F."/>
            <person name="Indge K.J."/>
            <person name="Isono K."/>
            <person name="Jacq C."/>
            <person name="Jacquet M."/>
            <person name="James C.M."/>
            <person name="Jauniaux J.-C."/>
            <person name="Jia Y."/>
            <person name="Jimenez A."/>
            <person name="Kelly A."/>
            <person name="Kleinhans U."/>
            <person name="Kreisl P."/>
            <person name="Lanfranchi G."/>
            <person name="Lewis C."/>
            <person name="van der Linden C.G."/>
            <person name="Lucchini G."/>
            <person name="Lutzenkirchen K."/>
            <person name="Maat M.J."/>
            <person name="Mallet L."/>
            <person name="Mannhaupt G."/>
            <person name="Martegani E."/>
            <person name="Mathieu A."/>
            <person name="Maurer C.T.C."/>
            <person name="McConnell D."/>
            <person name="McKee R.A."/>
            <person name="Messenguy F."/>
            <person name="Mewes H.-W."/>
            <person name="Molemans F."/>
            <person name="Montague M.A."/>
            <person name="Muzi Falconi M."/>
            <person name="Navas L."/>
            <person name="Newlon C.S."/>
            <person name="Noone D."/>
            <person name="Pallier C."/>
            <person name="Panzeri L."/>
            <person name="Pearson B.M."/>
            <person name="Perea J."/>
            <person name="Philippsen P."/>
            <person name="Pierard A."/>
            <person name="Planta R.J."/>
            <person name="Plevani P."/>
            <person name="Poetsch B."/>
            <person name="Pohl F.M."/>
            <person name="Purnelle B."/>
            <person name="Ramezani Rad M."/>
            <person name="Rasmussen S.W."/>
            <person name="Raynal A."/>
            <person name="Remacha M.A."/>
            <person name="Richterich P."/>
            <person name="Roberts A.B."/>
            <person name="Rodriguez F."/>
            <person name="Sanz E."/>
            <person name="Schaaff-Gerstenschlaeger I."/>
            <person name="Scherens B."/>
            <person name="Schweitzer B."/>
            <person name="Shu Y."/>
            <person name="Skala J."/>
            <person name="Slonimski P.P."/>
            <person name="Sor F."/>
            <person name="Soustelle C."/>
            <person name="Spiegelberg R."/>
            <person name="Stateva L.I."/>
            <person name="Steensma H.Y."/>
            <person name="Steiner S."/>
            <person name="Thierry A."/>
            <person name="Thireos G."/>
            <person name="Tzermia M."/>
            <person name="Urrestarazu L.A."/>
            <person name="Valle G."/>
            <person name="Vetter I."/>
            <person name="van Vliet-Reedijk J.C."/>
            <person name="Voet M."/>
            <person name="Volckaert G."/>
            <person name="Vreken P."/>
            <person name="Wang H."/>
            <person name="Warmington J.R."/>
            <person name="von Wettstein D."/>
            <person name="Wicksteed B.L."/>
            <person name="Wilson C."/>
            <person name="Wurst H."/>
            <person name="Xu G."/>
            <person name="Yoshikawa A."/>
            <person name="Zimmermann F.K."/>
            <person name="Sgouros J.G."/>
        </authorList>
    </citation>
    <scope>NUCLEOTIDE SEQUENCE [LARGE SCALE GENOMIC DNA]</scope>
    <source>
        <strain>ATCC 204508 / S288c</strain>
    </source>
</reference>
<reference key="3">
    <citation type="journal article" date="2014" name="G3 (Bethesda)">
        <title>The reference genome sequence of Saccharomyces cerevisiae: Then and now.</title>
        <authorList>
            <person name="Engel S.R."/>
            <person name="Dietrich F.S."/>
            <person name="Fisk D.G."/>
            <person name="Binkley G."/>
            <person name="Balakrishnan R."/>
            <person name="Costanzo M.C."/>
            <person name="Dwight S.S."/>
            <person name="Hitz B.C."/>
            <person name="Karra K."/>
            <person name="Nash R.S."/>
            <person name="Weng S."/>
            <person name="Wong E.D."/>
            <person name="Lloyd P."/>
            <person name="Skrzypek M.S."/>
            <person name="Miyasato S.R."/>
            <person name="Simison M."/>
            <person name="Cherry J.M."/>
        </authorList>
    </citation>
    <scope>GENOME REANNOTATION</scope>
    <source>
        <strain>ATCC 204508 / S288c</strain>
    </source>
</reference>
<reference key="4">
    <citation type="journal article" date="2007" name="Genome Res.">
        <title>Approaching a complete repository of sequence-verified protein-encoding clones for Saccharomyces cerevisiae.</title>
        <authorList>
            <person name="Hu Y."/>
            <person name="Rolfs A."/>
            <person name="Bhullar B."/>
            <person name="Murthy T.V.S."/>
            <person name="Zhu C."/>
            <person name="Berger M.F."/>
            <person name="Camargo A.A."/>
            <person name="Kelley F."/>
            <person name="McCarron S."/>
            <person name="Jepson D."/>
            <person name="Richardson A."/>
            <person name="Raphael J."/>
            <person name="Moreira D."/>
            <person name="Taycher E."/>
            <person name="Zuo D."/>
            <person name="Mohr S."/>
            <person name="Kane M.F."/>
            <person name="Williamson J."/>
            <person name="Simpson A.J.G."/>
            <person name="Bulyk M.L."/>
            <person name="Harlow E."/>
            <person name="Marsischky G."/>
            <person name="Kolodner R.D."/>
            <person name="LaBaer J."/>
        </authorList>
    </citation>
    <scope>NUCLEOTIDE SEQUENCE [GENOMIC DNA]</scope>
    <source>
        <strain>ATCC 204508 / S288c</strain>
    </source>
</reference>
<reference key="5">
    <citation type="journal article" date="2003" name="Nature">
        <title>Global analysis of protein expression in yeast.</title>
        <authorList>
            <person name="Ghaemmaghami S."/>
            <person name="Huh W.-K."/>
            <person name="Bower K."/>
            <person name="Howson R.W."/>
            <person name="Belle A."/>
            <person name="Dephoure N."/>
            <person name="O'Shea E.K."/>
            <person name="Weissman J.S."/>
        </authorList>
    </citation>
    <scope>LEVEL OF PROTEIN EXPRESSION [LARGE SCALE ANALYSIS]</scope>
</reference>
<proteinExistence type="evidence at protein level"/>
<comment type="domain">
    <text evidence="1">Requires a bound zinc ion for normal folding and solubility.</text>
</comment>
<comment type="miscellaneous">
    <text evidence="2">Present with 3970 molecules/cell in log phase SD medium.</text>
</comment>
<comment type="similarity">
    <text evidence="3">Belongs to the UPF0587 family.</text>
</comment>
<name>YCY0_YEAST</name>
<dbReference type="EMBL" id="X59720">
    <property type="protein sequence ID" value="CAA42255.1"/>
    <property type="molecule type" value="Genomic_DNA"/>
</dbReference>
<dbReference type="EMBL" id="AY558154">
    <property type="protein sequence ID" value="AAS56480.1"/>
    <property type="molecule type" value="Genomic_DNA"/>
</dbReference>
<dbReference type="EMBL" id="BK006937">
    <property type="protein sequence ID" value="DAA07559.1"/>
    <property type="molecule type" value="Genomic_DNA"/>
</dbReference>
<dbReference type="PIR" id="S19506">
    <property type="entry name" value="S19506"/>
</dbReference>
<dbReference type="RefSeq" id="NP_010014.1">
    <property type="nucleotide sequence ID" value="NM_001178796.1"/>
</dbReference>
<dbReference type="SMR" id="P25654"/>
<dbReference type="BioGRID" id="31062">
    <property type="interactions" value="260"/>
</dbReference>
<dbReference type="FunCoup" id="P25654">
    <property type="interactions" value="654"/>
</dbReference>
<dbReference type="MINT" id="P25654"/>
<dbReference type="STRING" id="4932.YCR090C"/>
<dbReference type="iPTMnet" id="P25654"/>
<dbReference type="PaxDb" id="4932-YCR090C"/>
<dbReference type="PeptideAtlas" id="P25654"/>
<dbReference type="EnsemblFungi" id="YCR090C_mRNA">
    <property type="protein sequence ID" value="YCR090C"/>
    <property type="gene ID" value="YCR090C"/>
</dbReference>
<dbReference type="GeneID" id="850452"/>
<dbReference type="KEGG" id="sce:YCR090C"/>
<dbReference type="AGR" id="SGD:S000000686"/>
<dbReference type="SGD" id="S000000686">
    <property type="gene designation" value="YCR090C"/>
</dbReference>
<dbReference type="VEuPathDB" id="FungiDB:YCR090C"/>
<dbReference type="eggNOG" id="KOG1296">
    <property type="taxonomic scope" value="Eukaryota"/>
</dbReference>
<dbReference type="GeneTree" id="ENSGT00390000001523"/>
<dbReference type="HOGENOM" id="CLU_114688_0_0_1"/>
<dbReference type="InParanoid" id="P25654"/>
<dbReference type="OMA" id="TAHFVWR"/>
<dbReference type="OrthoDB" id="10248838at2759"/>
<dbReference type="BioCyc" id="YEAST:G3O-29384-MONOMER"/>
<dbReference type="BioGRID-ORCS" id="850452">
    <property type="hits" value="0 hits in 10 CRISPR screens"/>
</dbReference>
<dbReference type="PRO" id="PR:P25654"/>
<dbReference type="Proteomes" id="UP000002311">
    <property type="component" value="Chromosome III"/>
</dbReference>
<dbReference type="RNAct" id="P25654">
    <property type="molecule type" value="protein"/>
</dbReference>
<dbReference type="GO" id="GO:0005737">
    <property type="term" value="C:cytoplasm"/>
    <property type="evidence" value="ECO:0007005"/>
    <property type="project" value="SGD"/>
</dbReference>
<dbReference type="GO" id="GO:0005634">
    <property type="term" value="C:nucleus"/>
    <property type="evidence" value="ECO:0007005"/>
    <property type="project" value="SGD"/>
</dbReference>
<dbReference type="GO" id="GO:0008270">
    <property type="term" value="F:zinc ion binding"/>
    <property type="evidence" value="ECO:0000318"/>
    <property type="project" value="GO_Central"/>
</dbReference>
<dbReference type="InterPro" id="IPR008584">
    <property type="entry name" value="CXXC_Zn-binding_euk"/>
</dbReference>
<dbReference type="PANTHER" id="PTHR12857">
    <property type="entry name" value="CXXC MOTIF CONTAINING ZINC BINDING PROTEIN"/>
    <property type="match status" value="1"/>
</dbReference>
<dbReference type="PANTHER" id="PTHR12857:SF0">
    <property type="entry name" value="CXXC MOTIF CONTAINING ZINC BINDING PROTEIN"/>
    <property type="match status" value="1"/>
</dbReference>
<dbReference type="Pfam" id="PF05907">
    <property type="entry name" value="CXXC_Zn-b_euk"/>
    <property type="match status" value="1"/>
</dbReference>
<dbReference type="SUPFAM" id="SSF141678">
    <property type="entry name" value="MAL13P1.257-like"/>
    <property type="match status" value="1"/>
</dbReference>
<gene>
    <name type="ordered locus">YCR090C</name>
    <name type="ORF">YCR1104</name>
    <name type="ORF">YCR90C</name>
</gene>
<feature type="chain" id="PRO_0000202580" description="UPF0587 protein YCR090C">
    <location>
        <begin position="1"/>
        <end position="182"/>
    </location>
</feature>
<feature type="binding site" evidence="1">
    <location>
        <position position="36"/>
    </location>
    <ligand>
        <name>Zn(2+)</name>
        <dbReference type="ChEBI" id="CHEBI:29105"/>
    </ligand>
</feature>
<feature type="binding site" evidence="1">
    <location>
        <position position="39"/>
    </location>
    <ligand>
        <name>Zn(2+)</name>
        <dbReference type="ChEBI" id="CHEBI:29105"/>
    </ligand>
</feature>
<feature type="binding site" evidence="1">
    <location>
        <position position="70"/>
    </location>
    <ligand>
        <name>Zn(2+)</name>
        <dbReference type="ChEBI" id="CHEBI:29105"/>
    </ligand>
</feature>
<feature type="binding site" evidence="1">
    <location>
        <position position="73"/>
    </location>
    <ligand>
        <name>Zn(2+)</name>
        <dbReference type="ChEBI" id="CHEBI:29105"/>
    </ligand>
</feature>